<keyword id="KW-0687">Ribonucleoprotein</keyword>
<keyword id="KW-0689">Ribosomal protein</keyword>
<keyword id="KW-0694">RNA-binding</keyword>
<keyword id="KW-0699">rRNA-binding</keyword>
<dbReference type="EMBL" id="AM421808">
    <property type="protein sequence ID" value="CAM09467.1"/>
    <property type="molecule type" value="Genomic_DNA"/>
</dbReference>
<dbReference type="RefSeq" id="WP_002215441.1">
    <property type="nucleotide sequence ID" value="NC_008767.1"/>
</dbReference>
<dbReference type="SMR" id="A1KRI9"/>
<dbReference type="GeneID" id="93387233"/>
<dbReference type="KEGG" id="nmc:NMC0148"/>
<dbReference type="HOGENOM" id="CLU_098841_0_1_4"/>
<dbReference type="Proteomes" id="UP000002286">
    <property type="component" value="Chromosome"/>
</dbReference>
<dbReference type="GO" id="GO:0022625">
    <property type="term" value="C:cytosolic large ribosomal subunit"/>
    <property type="evidence" value="ECO:0007669"/>
    <property type="project" value="TreeGrafter"/>
</dbReference>
<dbReference type="GO" id="GO:0008097">
    <property type="term" value="F:5S rRNA binding"/>
    <property type="evidence" value="ECO:0007669"/>
    <property type="project" value="TreeGrafter"/>
</dbReference>
<dbReference type="GO" id="GO:0003735">
    <property type="term" value="F:structural constituent of ribosome"/>
    <property type="evidence" value="ECO:0007669"/>
    <property type="project" value="InterPro"/>
</dbReference>
<dbReference type="GO" id="GO:0006412">
    <property type="term" value="P:translation"/>
    <property type="evidence" value="ECO:0007669"/>
    <property type="project" value="UniProtKB-UniRule"/>
</dbReference>
<dbReference type="CDD" id="cd00432">
    <property type="entry name" value="Ribosomal_L18_L5e"/>
    <property type="match status" value="1"/>
</dbReference>
<dbReference type="FunFam" id="3.30.420.100:FF:000001">
    <property type="entry name" value="50S ribosomal protein L18"/>
    <property type="match status" value="1"/>
</dbReference>
<dbReference type="Gene3D" id="3.30.420.100">
    <property type="match status" value="1"/>
</dbReference>
<dbReference type="HAMAP" id="MF_01337_B">
    <property type="entry name" value="Ribosomal_uL18_B"/>
    <property type="match status" value="1"/>
</dbReference>
<dbReference type="InterPro" id="IPR004389">
    <property type="entry name" value="Ribosomal_uL18_bac-type"/>
</dbReference>
<dbReference type="InterPro" id="IPR005484">
    <property type="entry name" value="Ribosomal_uL18_bac/euk"/>
</dbReference>
<dbReference type="NCBIfam" id="TIGR00060">
    <property type="entry name" value="L18_bact"/>
    <property type="match status" value="1"/>
</dbReference>
<dbReference type="PANTHER" id="PTHR12899">
    <property type="entry name" value="39S RIBOSOMAL PROTEIN L18, MITOCHONDRIAL"/>
    <property type="match status" value="1"/>
</dbReference>
<dbReference type="PANTHER" id="PTHR12899:SF3">
    <property type="entry name" value="LARGE RIBOSOMAL SUBUNIT PROTEIN UL18M"/>
    <property type="match status" value="1"/>
</dbReference>
<dbReference type="Pfam" id="PF00861">
    <property type="entry name" value="Ribosomal_L18p"/>
    <property type="match status" value="1"/>
</dbReference>
<dbReference type="SUPFAM" id="SSF53137">
    <property type="entry name" value="Translational machinery components"/>
    <property type="match status" value="1"/>
</dbReference>
<accession>A1KRI9</accession>
<reference key="1">
    <citation type="journal article" date="2007" name="PLoS Genet.">
        <title>Meningococcal genetic variation mechanisms viewed through comparative analysis of serogroup C strain FAM18.</title>
        <authorList>
            <person name="Bentley S.D."/>
            <person name="Vernikos G.S."/>
            <person name="Snyder L.A.S."/>
            <person name="Churcher C."/>
            <person name="Arrowsmith C."/>
            <person name="Chillingworth T."/>
            <person name="Cronin A."/>
            <person name="Davis P.H."/>
            <person name="Holroyd N.E."/>
            <person name="Jagels K."/>
            <person name="Maddison M."/>
            <person name="Moule S."/>
            <person name="Rabbinowitsch E."/>
            <person name="Sharp S."/>
            <person name="Unwin L."/>
            <person name="Whitehead S."/>
            <person name="Quail M.A."/>
            <person name="Achtman M."/>
            <person name="Barrell B.G."/>
            <person name="Saunders N.J."/>
            <person name="Parkhill J."/>
        </authorList>
    </citation>
    <scope>NUCLEOTIDE SEQUENCE [LARGE SCALE GENOMIC DNA]</scope>
    <source>
        <strain>ATCC 700532 / DSM 15464 / FAM18</strain>
    </source>
</reference>
<feature type="chain" id="PRO_1000053068" description="Large ribosomal subunit protein uL18">
    <location>
        <begin position="1"/>
        <end position="117"/>
    </location>
</feature>
<gene>
    <name evidence="1" type="primary">rplR</name>
    <name type="ordered locus">NMC0148</name>
</gene>
<evidence type="ECO:0000255" key="1">
    <source>
        <dbReference type="HAMAP-Rule" id="MF_01337"/>
    </source>
</evidence>
<evidence type="ECO:0000305" key="2"/>
<sequence>MDKHTTRLRRARKTRARIADLKMVRLCVFRSNNHIYAQVISAEGDKVLAQASTLEAEVRGSLKSGSNVEAAAIVGKRIAEKAKAAGVEKVAFDRSGFQYHGRVKALAEAARENGLSF</sequence>
<name>RL18_NEIMF</name>
<organism>
    <name type="scientific">Neisseria meningitidis serogroup C / serotype 2a (strain ATCC 700532 / DSM 15464 / FAM18)</name>
    <dbReference type="NCBI Taxonomy" id="272831"/>
    <lineage>
        <taxon>Bacteria</taxon>
        <taxon>Pseudomonadati</taxon>
        <taxon>Pseudomonadota</taxon>
        <taxon>Betaproteobacteria</taxon>
        <taxon>Neisseriales</taxon>
        <taxon>Neisseriaceae</taxon>
        <taxon>Neisseria</taxon>
    </lineage>
</organism>
<proteinExistence type="inferred from homology"/>
<comment type="function">
    <text evidence="1">This is one of the proteins that bind and probably mediate the attachment of the 5S RNA into the large ribosomal subunit, where it forms part of the central protuberance.</text>
</comment>
<comment type="subunit">
    <text evidence="1">Part of the 50S ribosomal subunit; part of the 5S rRNA/L5/L18/L25 subcomplex. Contacts the 5S and 23S rRNAs.</text>
</comment>
<comment type="similarity">
    <text evidence="1">Belongs to the universal ribosomal protein uL18 family.</text>
</comment>
<protein>
    <recommendedName>
        <fullName evidence="1">Large ribosomal subunit protein uL18</fullName>
    </recommendedName>
    <alternativeName>
        <fullName evidence="2">50S ribosomal protein L18</fullName>
    </alternativeName>
</protein>